<accession>C0HL09</accession>
<reference evidence="5" key="1">
    <citation type="journal article" date="2005" name="Peptides">
        <title>A family of acyclic brevinin-1 peptides from the skin of the Ryukyu brown frog Rana okinavana.</title>
        <authorList>
            <person name="Conlon J.M."/>
            <person name="Sonnevend A."/>
            <person name="Jouenne T."/>
            <person name="Coquet L."/>
            <person name="Cosquer D."/>
            <person name="Vaudry H."/>
            <person name="Iwamuro S."/>
        </authorList>
    </citation>
    <scope>PROTEIN SEQUENCE</scope>
    <scope>MASS SPECTROMETRY</scope>
    <scope>AMIDATION AT LYS-21</scope>
    <source>
        <tissue evidence="4">Skin</tissue>
    </source>
</reference>
<name>BR1B_NIDOK</name>
<feature type="peptide" id="PRO_0000443438" description="Brevinin-1OKb" evidence="3">
    <location>
        <begin position="1"/>
        <end position="21"/>
    </location>
</feature>
<feature type="modified residue" description="Lysine amide" evidence="3">
    <location>
        <position position="21"/>
    </location>
</feature>
<evidence type="ECO:0000250" key="1">
    <source>
        <dbReference type="UniProtKB" id="C0HL10"/>
    </source>
</evidence>
<evidence type="ECO:0000250" key="2">
    <source>
        <dbReference type="UniProtKB" id="P86027"/>
    </source>
</evidence>
<evidence type="ECO:0000269" key="3">
    <source>
    </source>
</evidence>
<evidence type="ECO:0000303" key="4">
    <source>
    </source>
</evidence>
<evidence type="ECO:0000305" key="5"/>
<evidence type="ECO:0000305" key="6">
    <source>
    </source>
</evidence>
<protein>
    <recommendedName>
        <fullName evidence="4">Brevinin-1OKb</fullName>
    </recommendedName>
</protein>
<sequence>FFPFVINELAKLPSLISLLKK</sequence>
<proteinExistence type="evidence at protein level"/>
<organism evidence="4">
    <name type="scientific">Nidirana okinavana</name>
    <name type="common">Kampira Falls frog</name>
    <name type="synonym">Babina okinavana</name>
    <dbReference type="NCBI Taxonomy" id="156870"/>
    <lineage>
        <taxon>Eukaryota</taxon>
        <taxon>Metazoa</taxon>
        <taxon>Chordata</taxon>
        <taxon>Craniata</taxon>
        <taxon>Vertebrata</taxon>
        <taxon>Euteleostomi</taxon>
        <taxon>Amphibia</taxon>
        <taxon>Batrachia</taxon>
        <taxon>Anura</taxon>
        <taxon>Neobatrachia</taxon>
        <taxon>Ranoidea</taxon>
        <taxon>Ranidae</taxon>
        <taxon>Nidirana</taxon>
    </lineage>
</organism>
<dbReference type="GO" id="GO:0005576">
    <property type="term" value="C:extracellular region"/>
    <property type="evidence" value="ECO:0000314"/>
    <property type="project" value="UniProtKB"/>
</dbReference>
<keyword id="KW-0027">Amidation</keyword>
<keyword id="KW-0929">Antimicrobial</keyword>
<keyword id="KW-0903">Direct protein sequencing</keyword>
<keyword id="KW-0964">Secreted</keyword>
<comment type="function">
    <text evidence="1">Antimicrobial peptide.</text>
</comment>
<comment type="subcellular location">
    <subcellularLocation>
        <location evidence="2">Secreted</location>
    </subcellularLocation>
</comment>
<comment type="tissue specificity">
    <text evidence="6">Expressed by the skin glands.</text>
</comment>
<comment type="mass spectrometry"/>
<comment type="similarity">
    <text evidence="4">Belongs to the frog skin active peptide (FSAP) family. Brevinin subfamily.</text>
</comment>